<sequence>MHIKKGDNVKVIAGKDKGKEGKVIATLPKKDRVVVEGVNIMKKHQKPTQLNPEGGILETEAAIHVSNVQLLDPKTNEPTRVGYKFVDGKKVRIAKKSGEEIKSNN</sequence>
<evidence type="ECO:0000255" key="1">
    <source>
        <dbReference type="HAMAP-Rule" id="MF_01326"/>
    </source>
</evidence>
<evidence type="ECO:0000305" key="2"/>
<proteinExistence type="inferred from homology"/>
<accession>Q6GEJ4</accession>
<protein>
    <recommendedName>
        <fullName evidence="1">Large ribosomal subunit protein uL24</fullName>
    </recommendedName>
    <alternativeName>
        <fullName evidence="2">50S ribosomal protein L24</fullName>
    </alternativeName>
</protein>
<dbReference type="EMBL" id="BX571856">
    <property type="protein sequence ID" value="CAG41305.1"/>
    <property type="molecule type" value="Genomic_DNA"/>
</dbReference>
<dbReference type="RefSeq" id="WP_000547687.1">
    <property type="nucleotide sequence ID" value="NC_002952.2"/>
</dbReference>
<dbReference type="SMR" id="Q6GEJ4"/>
<dbReference type="KEGG" id="sar:SAR2324"/>
<dbReference type="HOGENOM" id="CLU_093315_2_0_9"/>
<dbReference type="Proteomes" id="UP000000596">
    <property type="component" value="Chromosome"/>
</dbReference>
<dbReference type="GO" id="GO:1990904">
    <property type="term" value="C:ribonucleoprotein complex"/>
    <property type="evidence" value="ECO:0007669"/>
    <property type="project" value="UniProtKB-KW"/>
</dbReference>
<dbReference type="GO" id="GO:0005840">
    <property type="term" value="C:ribosome"/>
    <property type="evidence" value="ECO:0007669"/>
    <property type="project" value="UniProtKB-KW"/>
</dbReference>
<dbReference type="GO" id="GO:0019843">
    <property type="term" value="F:rRNA binding"/>
    <property type="evidence" value="ECO:0007669"/>
    <property type="project" value="UniProtKB-UniRule"/>
</dbReference>
<dbReference type="GO" id="GO:0003735">
    <property type="term" value="F:structural constituent of ribosome"/>
    <property type="evidence" value="ECO:0007669"/>
    <property type="project" value="InterPro"/>
</dbReference>
<dbReference type="GO" id="GO:0006412">
    <property type="term" value="P:translation"/>
    <property type="evidence" value="ECO:0007669"/>
    <property type="project" value="UniProtKB-UniRule"/>
</dbReference>
<dbReference type="CDD" id="cd06089">
    <property type="entry name" value="KOW_RPL26"/>
    <property type="match status" value="1"/>
</dbReference>
<dbReference type="FunFam" id="2.30.30.30:FF:000004">
    <property type="entry name" value="50S ribosomal protein L24"/>
    <property type="match status" value="1"/>
</dbReference>
<dbReference type="Gene3D" id="2.30.30.30">
    <property type="match status" value="1"/>
</dbReference>
<dbReference type="HAMAP" id="MF_01326_B">
    <property type="entry name" value="Ribosomal_uL24_B"/>
    <property type="match status" value="1"/>
</dbReference>
<dbReference type="InterPro" id="IPR005824">
    <property type="entry name" value="KOW"/>
</dbReference>
<dbReference type="InterPro" id="IPR014722">
    <property type="entry name" value="Rib_uL2_dom2"/>
</dbReference>
<dbReference type="InterPro" id="IPR003256">
    <property type="entry name" value="Ribosomal_uL24"/>
</dbReference>
<dbReference type="InterPro" id="IPR005825">
    <property type="entry name" value="Ribosomal_uL24_CS"/>
</dbReference>
<dbReference type="InterPro" id="IPR041988">
    <property type="entry name" value="Ribosomal_uL24_KOW"/>
</dbReference>
<dbReference type="InterPro" id="IPR008991">
    <property type="entry name" value="Translation_prot_SH3-like_sf"/>
</dbReference>
<dbReference type="NCBIfam" id="TIGR01079">
    <property type="entry name" value="rplX_bact"/>
    <property type="match status" value="1"/>
</dbReference>
<dbReference type="PANTHER" id="PTHR12903">
    <property type="entry name" value="MITOCHONDRIAL RIBOSOMAL PROTEIN L24"/>
    <property type="match status" value="1"/>
</dbReference>
<dbReference type="Pfam" id="PF00467">
    <property type="entry name" value="KOW"/>
    <property type="match status" value="1"/>
</dbReference>
<dbReference type="Pfam" id="PF17136">
    <property type="entry name" value="ribosomal_L24"/>
    <property type="match status" value="1"/>
</dbReference>
<dbReference type="SMART" id="SM00739">
    <property type="entry name" value="KOW"/>
    <property type="match status" value="1"/>
</dbReference>
<dbReference type="SUPFAM" id="SSF50104">
    <property type="entry name" value="Translation proteins SH3-like domain"/>
    <property type="match status" value="1"/>
</dbReference>
<dbReference type="PROSITE" id="PS01108">
    <property type="entry name" value="RIBOSOMAL_L24"/>
    <property type="match status" value="1"/>
</dbReference>
<reference key="1">
    <citation type="journal article" date="2004" name="Proc. Natl. Acad. Sci. U.S.A.">
        <title>Complete genomes of two clinical Staphylococcus aureus strains: evidence for the rapid evolution of virulence and drug resistance.</title>
        <authorList>
            <person name="Holden M.T.G."/>
            <person name="Feil E.J."/>
            <person name="Lindsay J.A."/>
            <person name="Peacock S.J."/>
            <person name="Day N.P.J."/>
            <person name="Enright M.C."/>
            <person name="Foster T.J."/>
            <person name="Moore C.E."/>
            <person name="Hurst L."/>
            <person name="Atkin R."/>
            <person name="Barron A."/>
            <person name="Bason N."/>
            <person name="Bentley S.D."/>
            <person name="Chillingworth C."/>
            <person name="Chillingworth T."/>
            <person name="Churcher C."/>
            <person name="Clark L."/>
            <person name="Corton C."/>
            <person name="Cronin A."/>
            <person name="Doggett J."/>
            <person name="Dowd L."/>
            <person name="Feltwell T."/>
            <person name="Hance Z."/>
            <person name="Harris B."/>
            <person name="Hauser H."/>
            <person name="Holroyd S."/>
            <person name="Jagels K."/>
            <person name="James K.D."/>
            <person name="Lennard N."/>
            <person name="Line A."/>
            <person name="Mayes R."/>
            <person name="Moule S."/>
            <person name="Mungall K."/>
            <person name="Ormond D."/>
            <person name="Quail M.A."/>
            <person name="Rabbinowitsch E."/>
            <person name="Rutherford K.M."/>
            <person name="Sanders M."/>
            <person name="Sharp S."/>
            <person name="Simmonds M."/>
            <person name="Stevens K."/>
            <person name="Whitehead S."/>
            <person name="Barrell B.G."/>
            <person name="Spratt B.G."/>
            <person name="Parkhill J."/>
        </authorList>
    </citation>
    <scope>NUCLEOTIDE SEQUENCE [LARGE SCALE GENOMIC DNA]</scope>
    <source>
        <strain>MRSA252</strain>
    </source>
</reference>
<keyword id="KW-0687">Ribonucleoprotein</keyword>
<keyword id="KW-0689">Ribosomal protein</keyword>
<keyword id="KW-0694">RNA-binding</keyword>
<keyword id="KW-0699">rRNA-binding</keyword>
<name>RL24_STAAR</name>
<organism>
    <name type="scientific">Staphylococcus aureus (strain MRSA252)</name>
    <dbReference type="NCBI Taxonomy" id="282458"/>
    <lineage>
        <taxon>Bacteria</taxon>
        <taxon>Bacillati</taxon>
        <taxon>Bacillota</taxon>
        <taxon>Bacilli</taxon>
        <taxon>Bacillales</taxon>
        <taxon>Staphylococcaceae</taxon>
        <taxon>Staphylococcus</taxon>
    </lineage>
</organism>
<feature type="chain" id="PRO_0000130717" description="Large ribosomal subunit protein uL24">
    <location>
        <begin position="1"/>
        <end position="105"/>
    </location>
</feature>
<gene>
    <name evidence="1" type="primary">rplX</name>
    <name type="ordered locus">SAR2324</name>
</gene>
<comment type="function">
    <text evidence="1">One of two assembly initiator proteins, it binds directly to the 5'-end of the 23S rRNA, where it nucleates assembly of the 50S subunit.</text>
</comment>
<comment type="function">
    <text evidence="1">One of the proteins that surrounds the polypeptide exit tunnel on the outside of the subunit.</text>
</comment>
<comment type="subunit">
    <text evidence="1">Part of the 50S ribosomal subunit.</text>
</comment>
<comment type="similarity">
    <text evidence="1">Belongs to the universal ribosomal protein uL24 family.</text>
</comment>